<feature type="chain" id="PRO_0000250355" description="Galactan 5-O-arabinofuranosyltransferase">
    <location>
        <begin position="1"/>
        <end position="632"/>
    </location>
</feature>
<feature type="transmembrane region" description="Helical" evidence="2">
    <location>
        <begin position="10"/>
        <end position="30"/>
    </location>
</feature>
<feature type="transmembrane region" description="Helical" evidence="2">
    <location>
        <begin position="45"/>
        <end position="65"/>
    </location>
</feature>
<feature type="transmembrane region" description="Helical" evidence="2">
    <location>
        <begin position="76"/>
        <end position="96"/>
    </location>
</feature>
<feature type="transmembrane region" description="Helical" evidence="2">
    <location>
        <begin position="162"/>
        <end position="182"/>
    </location>
</feature>
<feature type="transmembrane region" description="Helical" evidence="2">
    <location>
        <begin position="184"/>
        <end position="204"/>
    </location>
</feature>
<feature type="transmembrane region" description="Helical" evidence="2">
    <location>
        <begin position="206"/>
        <end position="226"/>
    </location>
</feature>
<feature type="transmembrane region" description="Helical" evidence="2">
    <location>
        <begin position="242"/>
        <end position="259"/>
    </location>
</feature>
<feature type="transmembrane region" description="Helical" evidence="2">
    <location>
        <begin position="263"/>
        <end position="282"/>
    </location>
</feature>
<feature type="transmembrane region" description="Helical" evidence="2">
    <location>
        <begin position="298"/>
        <end position="318"/>
    </location>
</feature>
<feature type="transmembrane region" description="Helical" evidence="2">
    <location>
        <begin position="344"/>
        <end position="364"/>
    </location>
</feature>
<feature type="transmembrane region" description="Helical" evidence="2">
    <location>
        <begin position="375"/>
        <end position="395"/>
    </location>
</feature>
<feature type="transmembrane region" description="Helical" evidence="2">
    <location>
        <begin position="409"/>
        <end position="429"/>
    </location>
</feature>
<feature type="transmembrane region" description="Helical" evidence="2">
    <location>
        <begin position="434"/>
        <end position="454"/>
    </location>
</feature>
<feature type="topological domain" description="Extracellular" evidence="2">
    <location>
        <begin position="455"/>
        <end position="632"/>
    </location>
</feature>
<reference key="1">
    <citation type="journal article" date="2001" name="Nature">
        <title>Massive gene decay in the leprosy bacillus.</title>
        <authorList>
            <person name="Cole S.T."/>
            <person name="Eiglmeier K."/>
            <person name="Parkhill J."/>
            <person name="James K.D."/>
            <person name="Thomson N.R."/>
            <person name="Wheeler P.R."/>
            <person name="Honore N."/>
            <person name="Garnier T."/>
            <person name="Churcher C.M."/>
            <person name="Harris D.E."/>
            <person name="Mungall K.L."/>
            <person name="Basham D."/>
            <person name="Brown D."/>
            <person name="Chillingworth T."/>
            <person name="Connor R."/>
            <person name="Davies R.M."/>
            <person name="Devlin K."/>
            <person name="Duthoy S."/>
            <person name="Feltwell T."/>
            <person name="Fraser A."/>
            <person name="Hamlin N."/>
            <person name="Holroyd S."/>
            <person name="Hornsby T."/>
            <person name="Jagels K."/>
            <person name="Lacroix C."/>
            <person name="Maclean J."/>
            <person name="Moule S."/>
            <person name="Murphy L.D."/>
            <person name="Oliver K."/>
            <person name="Quail M.A."/>
            <person name="Rajandream M.A."/>
            <person name="Rutherford K.M."/>
            <person name="Rutter S."/>
            <person name="Seeger K."/>
            <person name="Simon S."/>
            <person name="Simmonds M."/>
            <person name="Skelton J."/>
            <person name="Squares R."/>
            <person name="Squares S."/>
            <person name="Stevens K."/>
            <person name="Taylor K."/>
            <person name="Whitehead S."/>
            <person name="Woodward J.R."/>
            <person name="Barrell B.G."/>
        </authorList>
    </citation>
    <scope>NUCLEOTIDE SEQUENCE [LARGE SCALE GENOMIC DNA]</scope>
    <source>
        <strain>TN</strain>
    </source>
</reference>
<evidence type="ECO:0000250" key="1">
    <source>
        <dbReference type="UniProtKB" id="P9WN03"/>
    </source>
</evidence>
<evidence type="ECO:0000255" key="2"/>
<evidence type="ECO:0000305" key="3"/>
<protein>
    <recommendedName>
        <fullName evidence="1">Galactan 5-O-arabinofuranosyltransferase</fullName>
        <ecNumber evidence="1">2.4.2.46</ecNumber>
    </recommendedName>
    <alternativeName>
        <fullName evidence="1">Arabinofuranosyltransferase AftA</fullName>
    </alternativeName>
</protein>
<gene>
    <name evidence="1" type="primary">aftA</name>
    <name type="ordered locus">ML0107</name>
</gene>
<name>AFTA_MYCLE</name>
<dbReference type="EC" id="2.4.2.46" evidence="1"/>
<dbReference type="EMBL" id="AL583917">
    <property type="protein sequence ID" value="CAC29615.1"/>
    <property type="molecule type" value="Genomic_DNA"/>
</dbReference>
<dbReference type="PIR" id="C86922">
    <property type="entry name" value="C86922"/>
</dbReference>
<dbReference type="RefSeq" id="NP_301204.1">
    <property type="nucleotide sequence ID" value="NC_002677.1"/>
</dbReference>
<dbReference type="RefSeq" id="WP_010907529.1">
    <property type="nucleotide sequence ID" value="NC_002677.1"/>
</dbReference>
<dbReference type="SMR" id="Q9CDA6"/>
<dbReference type="STRING" id="272631.gene:17573919"/>
<dbReference type="CAZy" id="GT85">
    <property type="family name" value="Glycosyltransferase Family 85"/>
</dbReference>
<dbReference type="KEGG" id="mle:ML0107"/>
<dbReference type="PATRIC" id="fig|272631.5.peg.170"/>
<dbReference type="Leproma" id="ML0107"/>
<dbReference type="eggNOG" id="ENOG502ZB59">
    <property type="taxonomic scope" value="Bacteria"/>
</dbReference>
<dbReference type="HOGENOM" id="CLU_021304_0_0_11"/>
<dbReference type="OrthoDB" id="4775300at2"/>
<dbReference type="UniPathway" id="UPA00963"/>
<dbReference type="Proteomes" id="UP000000806">
    <property type="component" value="Chromosome"/>
</dbReference>
<dbReference type="GO" id="GO:0005886">
    <property type="term" value="C:plasma membrane"/>
    <property type="evidence" value="ECO:0007669"/>
    <property type="project" value="UniProtKB-SubCell"/>
</dbReference>
<dbReference type="GO" id="GO:0016757">
    <property type="term" value="F:glycosyltransferase activity"/>
    <property type="evidence" value="ECO:0007669"/>
    <property type="project" value="UniProtKB-KW"/>
</dbReference>
<dbReference type="GO" id="GO:0045227">
    <property type="term" value="P:capsule polysaccharide biosynthetic process"/>
    <property type="evidence" value="ECO:0007669"/>
    <property type="project" value="UniProtKB-UniPathway"/>
</dbReference>
<dbReference type="GO" id="GO:0044038">
    <property type="term" value="P:cell wall macromolecule biosynthetic process"/>
    <property type="evidence" value="ECO:0007669"/>
    <property type="project" value="InterPro"/>
</dbReference>
<dbReference type="GO" id="GO:0071555">
    <property type="term" value="P:cell wall organization"/>
    <property type="evidence" value="ECO:0007669"/>
    <property type="project" value="UniProtKB-KW"/>
</dbReference>
<dbReference type="InterPro" id="IPR020959">
    <property type="entry name" value="ArabinofuranosylTrfase_AftA_C"/>
</dbReference>
<dbReference type="InterPro" id="IPR020963">
    <property type="entry name" value="ArabinofuranosylTrfase_AftA_N"/>
</dbReference>
<dbReference type="Pfam" id="PF12249">
    <property type="entry name" value="AftA_C"/>
    <property type="match status" value="1"/>
</dbReference>
<dbReference type="Pfam" id="PF12250">
    <property type="entry name" value="AftA_N"/>
    <property type="match status" value="1"/>
</dbReference>
<proteinExistence type="inferred from homology"/>
<accession>Q9CDA6</accession>
<comment type="function">
    <text evidence="1">Involved in the biosynthesis of the arabinogalactan (AG) region of the mycolylarabinogalactan-peptidoglycan (mAGP) complex, an essential component of the mycobacterial cell wall. Catalyzes the addition of the first key arabinofuranosyl (Araf) residue from the sugar donor decaprenyl-phospho-arabinose (DPA) on the C-5 of a 6-linked galactofuranosyl (Galf) of the galactan domain, thus 'priming' the galactan for further elaboration by other arabinofuranosyltransferases.</text>
</comment>
<comment type="catalytic activity">
    <reaction evidence="1">
        <text>Adds an alpha-D-arabinofuranosyl group from trans,octacis-decaprenylphospho-beta-D-arabinofuranose at the 5-O-position of the eighth, tenth and twelfth galactofuranose unit of the galactofuranan chain of [beta-D-galactofuranosyl-(1-&gt;5)-beta-D-galactofuranosyl-(1-&gt;6)]14-beta-D-galactofuranosyl-(1-&gt;5)-beta-D-galactofuranosyl-(1-&gt;4)-alpha-L-rhamnopyranosyl-(1-&gt;3)-N-acetyl-alpha-D-glucosaminyl-diphospho-trans,octacis-decaprenol.</text>
        <dbReference type="EC" id="2.4.2.46"/>
    </reaction>
</comment>
<comment type="pathway">
    <text evidence="1">Cell wall biogenesis; cell wall polysaccharide biosynthesis.</text>
</comment>
<comment type="subcellular location">
    <subcellularLocation>
        <location evidence="1">Cell membrane</location>
        <topology evidence="1">Multi-pass membrane protein</topology>
    </subcellularLocation>
</comment>
<comment type="similarity">
    <text evidence="3">Belongs to the glycosyltransferase 85 family.</text>
</comment>
<sequence>MRNALASFGQIVLAAVVASGVAAVSLIAIARVHWPAFPSSNQLHALTTVGQVGCLTGLLAVGGVWQAGRFRRLAQLGGLVFVSAFTVVTLGMPLGATKLYLFGISVDQQFRTEYLTRLTDSAALQDMTYLGLPPFYPPGWFWIGGRVAALTGTPAWEIFKPWAITSITIAVAITLVLWWQMIRFEYALLVTIATAAVTLVYSSPEPYAAMITVLLPPALVLTWSGLRAAEREADRTLGNKRGWATVVGAGIFLGFAATWYTLLLAYTAFTVVLMTLLLATALCRRAGFRATFDPLRRLAGIVVIAAAIGAITWLPFLARAAHDPVSDTGSAQHYLPADGAELAFPMLQFSLLGMICMLGTLWLIVRTSSSVRASALMISVLAVYLWSLLSILTTLARTTLLSFRLQPTLTVLLVTAGVFGFIETAQSLAKHNRAVLSVASAIGLAGAIAFSQDIPNVLRPDLTIAYTDTDGHGQRGDRRPPGSEKYYWAIDEAVLHITGKPRDQTVVLTADYSFLAYYPYWGFQGLTSHYANPLAQFDLRAAQIQQWSRLTTASELIHALDTLPWPPPTVFVMRHGAGNTYTLRLAKNVYPNQPNVRRYTVDLPAALFADQRFAVQDIGPFVLAIRKPMGNA</sequence>
<keyword id="KW-1003">Cell membrane</keyword>
<keyword id="KW-0961">Cell wall biogenesis/degradation</keyword>
<keyword id="KW-0328">Glycosyltransferase</keyword>
<keyword id="KW-0472">Membrane</keyword>
<keyword id="KW-1185">Reference proteome</keyword>
<keyword id="KW-0808">Transferase</keyword>
<keyword id="KW-0812">Transmembrane</keyword>
<keyword id="KW-1133">Transmembrane helix</keyword>
<organism>
    <name type="scientific">Mycobacterium leprae (strain TN)</name>
    <dbReference type="NCBI Taxonomy" id="272631"/>
    <lineage>
        <taxon>Bacteria</taxon>
        <taxon>Bacillati</taxon>
        <taxon>Actinomycetota</taxon>
        <taxon>Actinomycetes</taxon>
        <taxon>Mycobacteriales</taxon>
        <taxon>Mycobacteriaceae</taxon>
        <taxon>Mycobacterium</taxon>
    </lineage>
</organism>